<accession>A8F851</accession>
<gene>
    <name evidence="1" type="primary">grpE</name>
    <name type="ordered locus">Tlet_1781</name>
</gene>
<reference key="1">
    <citation type="submission" date="2007-08" db="EMBL/GenBank/DDBJ databases">
        <title>Complete sequence of Thermotoga lettingae TMO.</title>
        <authorList>
            <consortium name="US DOE Joint Genome Institute"/>
            <person name="Copeland A."/>
            <person name="Lucas S."/>
            <person name="Lapidus A."/>
            <person name="Barry K."/>
            <person name="Glavina del Rio T."/>
            <person name="Dalin E."/>
            <person name="Tice H."/>
            <person name="Pitluck S."/>
            <person name="Foster B."/>
            <person name="Bruce D."/>
            <person name="Schmutz J."/>
            <person name="Larimer F."/>
            <person name="Land M."/>
            <person name="Hauser L."/>
            <person name="Kyrpides N."/>
            <person name="Mikhailova N."/>
            <person name="Nelson K."/>
            <person name="Gogarten J.P."/>
            <person name="Noll K."/>
            <person name="Richardson P."/>
        </authorList>
    </citation>
    <scope>NUCLEOTIDE SEQUENCE [LARGE SCALE GENOMIC DNA]</scope>
    <source>
        <strain>ATCC BAA-301 / DSM 14385 / NBRC 107922 / TMO</strain>
    </source>
</reference>
<dbReference type="EMBL" id="CP000812">
    <property type="protein sequence ID" value="ABV34335.1"/>
    <property type="molecule type" value="Genomic_DNA"/>
</dbReference>
<dbReference type="RefSeq" id="WP_012003811.1">
    <property type="nucleotide sequence ID" value="NZ_BSDV01000001.1"/>
</dbReference>
<dbReference type="SMR" id="A8F851"/>
<dbReference type="STRING" id="416591.Tlet_1781"/>
<dbReference type="KEGG" id="tle:Tlet_1781"/>
<dbReference type="eggNOG" id="COG0576">
    <property type="taxonomic scope" value="Bacteria"/>
</dbReference>
<dbReference type="HOGENOM" id="CLU_057217_5_2_0"/>
<dbReference type="OrthoDB" id="37628at2"/>
<dbReference type="Proteomes" id="UP000002016">
    <property type="component" value="Chromosome"/>
</dbReference>
<dbReference type="GO" id="GO:0005737">
    <property type="term" value="C:cytoplasm"/>
    <property type="evidence" value="ECO:0007669"/>
    <property type="project" value="UniProtKB-SubCell"/>
</dbReference>
<dbReference type="GO" id="GO:0000774">
    <property type="term" value="F:adenyl-nucleotide exchange factor activity"/>
    <property type="evidence" value="ECO:0007669"/>
    <property type="project" value="InterPro"/>
</dbReference>
<dbReference type="GO" id="GO:0042803">
    <property type="term" value="F:protein homodimerization activity"/>
    <property type="evidence" value="ECO:0007669"/>
    <property type="project" value="InterPro"/>
</dbReference>
<dbReference type="GO" id="GO:0051087">
    <property type="term" value="F:protein-folding chaperone binding"/>
    <property type="evidence" value="ECO:0007669"/>
    <property type="project" value="InterPro"/>
</dbReference>
<dbReference type="GO" id="GO:0051082">
    <property type="term" value="F:unfolded protein binding"/>
    <property type="evidence" value="ECO:0007669"/>
    <property type="project" value="TreeGrafter"/>
</dbReference>
<dbReference type="GO" id="GO:0006457">
    <property type="term" value="P:protein folding"/>
    <property type="evidence" value="ECO:0007669"/>
    <property type="project" value="InterPro"/>
</dbReference>
<dbReference type="CDD" id="cd00446">
    <property type="entry name" value="GrpE"/>
    <property type="match status" value="1"/>
</dbReference>
<dbReference type="Gene3D" id="3.90.20.20">
    <property type="match status" value="1"/>
</dbReference>
<dbReference type="Gene3D" id="2.30.22.10">
    <property type="entry name" value="Head domain of nucleotide exchange factor GrpE"/>
    <property type="match status" value="1"/>
</dbReference>
<dbReference type="HAMAP" id="MF_01151">
    <property type="entry name" value="GrpE"/>
    <property type="match status" value="1"/>
</dbReference>
<dbReference type="InterPro" id="IPR000740">
    <property type="entry name" value="GrpE"/>
</dbReference>
<dbReference type="InterPro" id="IPR013805">
    <property type="entry name" value="GrpE_coiled_coil"/>
</dbReference>
<dbReference type="InterPro" id="IPR009012">
    <property type="entry name" value="GrpE_head"/>
</dbReference>
<dbReference type="PANTHER" id="PTHR21237">
    <property type="entry name" value="GRPE PROTEIN"/>
    <property type="match status" value="1"/>
</dbReference>
<dbReference type="PANTHER" id="PTHR21237:SF23">
    <property type="entry name" value="GRPE PROTEIN HOMOLOG, MITOCHONDRIAL"/>
    <property type="match status" value="1"/>
</dbReference>
<dbReference type="Pfam" id="PF01025">
    <property type="entry name" value="GrpE"/>
    <property type="match status" value="1"/>
</dbReference>
<dbReference type="PRINTS" id="PR00773">
    <property type="entry name" value="GRPEPROTEIN"/>
</dbReference>
<dbReference type="SUPFAM" id="SSF58014">
    <property type="entry name" value="Coiled-coil domain of nucleotide exchange factor GrpE"/>
    <property type="match status" value="1"/>
</dbReference>
<dbReference type="SUPFAM" id="SSF51064">
    <property type="entry name" value="Head domain of nucleotide exchange factor GrpE"/>
    <property type="match status" value="1"/>
</dbReference>
<evidence type="ECO:0000255" key="1">
    <source>
        <dbReference type="HAMAP-Rule" id="MF_01151"/>
    </source>
</evidence>
<organism>
    <name type="scientific">Pseudothermotoga lettingae (strain ATCC BAA-301 / DSM 14385 / NBRC 107922 / TMO)</name>
    <name type="common">Thermotoga lettingae</name>
    <dbReference type="NCBI Taxonomy" id="416591"/>
    <lineage>
        <taxon>Bacteria</taxon>
        <taxon>Thermotogati</taxon>
        <taxon>Thermotogota</taxon>
        <taxon>Thermotogae</taxon>
        <taxon>Thermotogales</taxon>
        <taxon>Thermotogaceae</taxon>
        <taxon>Pseudothermotoga</taxon>
    </lineage>
</organism>
<feature type="chain" id="PRO_1000065523" description="Protein GrpE">
    <location>
        <begin position="1"/>
        <end position="174"/>
    </location>
</feature>
<proteinExistence type="inferred from homology"/>
<keyword id="KW-0143">Chaperone</keyword>
<keyword id="KW-0963">Cytoplasm</keyword>
<keyword id="KW-1185">Reference proteome</keyword>
<keyword id="KW-0346">Stress response</keyword>
<name>GRPE_PSELT</name>
<protein>
    <recommendedName>
        <fullName evidence="1">Protein GrpE</fullName>
    </recommendedName>
    <alternativeName>
        <fullName evidence="1">HSP-70 cofactor</fullName>
    </alternativeName>
</protein>
<comment type="function">
    <text evidence="1">Participates actively in the response to hyperosmotic and heat shock by preventing the aggregation of stress-denatured proteins, in association with DnaK and GrpE. It is the nucleotide exchange factor for DnaK and may function as a thermosensor. Unfolded proteins bind initially to DnaJ; upon interaction with the DnaJ-bound protein, DnaK hydrolyzes its bound ATP, resulting in the formation of a stable complex. GrpE releases ADP from DnaK; ATP binding to DnaK triggers the release of the substrate protein, thus completing the reaction cycle. Several rounds of ATP-dependent interactions between DnaJ, DnaK and GrpE are required for fully efficient folding.</text>
</comment>
<comment type="subunit">
    <text evidence="1">Homodimer.</text>
</comment>
<comment type="subcellular location">
    <subcellularLocation>
        <location evidence="1">Cytoplasm</location>
    </subcellularLocation>
</comment>
<comment type="similarity">
    <text evidence="1">Belongs to the GrpE family.</text>
</comment>
<sequence length="174" mass="20887">MNENEKPQITEQKENQSALDQLIKEKHELLEHLRQLKAQFENYKRDSLREKEQVLKNANEYFLVKLIPVLDDMERAFEEVRRSKSYKNFYSGMEIIYKKLWKILNDEGLFKIEPKEKFDPFEHEAVERVETDEKEEYSILKILENGYKFHKKIVKPVKVQVAVRPRGENGAKTE</sequence>